<organism>
    <name type="scientific">Helicobacter pylori (strain Shi470)</name>
    <dbReference type="NCBI Taxonomy" id="512562"/>
    <lineage>
        <taxon>Bacteria</taxon>
        <taxon>Pseudomonadati</taxon>
        <taxon>Campylobacterota</taxon>
        <taxon>Epsilonproteobacteria</taxon>
        <taxon>Campylobacterales</taxon>
        <taxon>Helicobacteraceae</taxon>
        <taxon>Helicobacter</taxon>
    </lineage>
</organism>
<evidence type="ECO:0000255" key="1">
    <source>
        <dbReference type="HAMAP-Rule" id="MF_01333"/>
    </source>
</evidence>
<evidence type="ECO:0000305" key="2"/>
<gene>
    <name evidence="1" type="primary">rplE</name>
    <name type="ordered locus">HPSH_06760</name>
</gene>
<comment type="function">
    <text evidence="1">This is one of the proteins that bind and probably mediate the attachment of the 5S RNA into the large ribosomal subunit, where it forms part of the central protuberance. In the 70S ribosome it contacts protein S13 of the 30S subunit (bridge B1b), connecting the 2 subunits; this bridge is implicated in subunit movement. Contacts the P site tRNA; the 5S rRNA and some of its associated proteins might help stabilize positioning of ribosome-bound tRNAs.</text>
</comment>
<comment type="subunit">
    <text evidence="1">Part of the 50S ribosomal subunit; part of the 5S rRNA/L5/L18/L25 subcomplex. Contacts the 5S rRNA and the P site tRNA. Forms a bridge to the 30S subunit in the 70S ribosome.</text>
</comment>
<comment type="similarity">
    <text evidence="1">Belongs to the universal ribosomal protein uL5 family.</text>
</comment>
<name>RL5_HELPS</name>
<accession>B2UV70</accession>
<reference key="1">
    <citation type="submission" date="2008-05" db="EMBL/GenBank/DDBJ databases">
        <title>Genome sequence of Helicobacter pylori from the remote Amazon: traces of Asian ancestry of the first Americans.</title>
        <authorList>
            <person name="Kersulyte D."/>
            <person name="Kalia A."/>
            <person name="Gilman R.H."/>
            <person name="Berg D.E."/>
        </authorList>
    </citation>
    <scope>NUCLEOTIDE SEQUENCE [LARGE SCALE GENOMIC DNA]</scope>
    <source>
        <strain>Shi470</strain>
    </source>
</reference>
<protein>
    <recommendedName>
        <fullName evidence="1">Large ribosomal subunit protein uL5</fullName>
    </recommendedName>
    <alternativeName>
        <fullName evidence="2">50S ribosomal protein L5</fullName>
    </alternativeName>
</protein>
<proteinExistence type="inferred from homology"/>
<feature type="chain" id="PRO_1000142411" description="Large ribosomal subunit protein uL5">
    <location>
        <begin position="1"/>
        <end position="181"/>
    </location>
</feature>
<sequence>MFGLKQFYQNEVRAKLAQELDIKNPMLLPKLEKIVISVGAGAHAKDMKIMQNIAQTISLIAGQKAVITKAKKSVAGFKIREGMAVGAKVTLRNKRMYNFLEKLIVISLPRVKDFRGISRNGFDGRGNYTFGINEQLIFPEVVYDDIMVSHGMNITMVTSTDSDKEAFKLLELLGLPFAKVR</sequence>
<keyword id="KW-0687">Ribonucleoprotein</keyword>
<keyword id="KW-0689">Ribosomal protein</keyword>
<keyword id="KW-0694">RNA-binding</keyword>
<keyword id="KW-0699">rRNA-binding</keyword>
<keyword id="KW-0820">tRNA-binding</keyword>
<dbReference type="EMBL" id="CP001072">
    <property type="protein sequence ID" value="ACD48752.1"/>
    <property type="molecule type" value="Genomic_DNA"/>
</dbReference>
<dbReference type="RefSeq" id="WP_000467367.1">
    <property type="nucleotide sequence ID" value="NC_010698.2"/>
</dbReference>
<dbReference type="SMR" id="B2UV70"/>
<dbReference type="KEGG" id="hps:HPSH_06760"/>
<dbReference type="HOGENOM" id="CLU_061015_2_1_7"/>
<dbReference type="GO" id="GO:1990904">
    <property type="term" value="C:ribonucleoprotein complex"/>
    <property type="evidence" value="ECO:0007669"/>
    <property type="project" value="UniProtKB-KW"/>
</dbReference>
<dbReference type="GO" id="GO:0005840">
    <property type="term" value="C:ribosome"/>
    <property type="evidence" value="ECO:0007669"/>
    <property type="project" value="UniProtKB-KW"/>
</dbReference>
<dbReference type="GO" id="GO:0019843">
    <property type="term" value="F:rRNA binding"/>
    <property type="evidence" value="ECO:0007669"/>
    <property type="project" value="UniProtKB-UniRule"/>
</dbReference>
<dbReference type="GO" id="GO:0003735">
    <property type="term" value="F:structural constituent of ribosome"/>
    <property type="evidence" value="ECO:0007669"/>
    <property type="project" value="InterPro"/>
</dbReference>
<dbReference type="GO" id="GO:0000049">
    <property type="term" value="F:tRNA binding"/>
    <property type="evidence" value="ECO:0007669"/>
    <property type="project" value="UniProtKB-UniRule"/>
</dbReference>
<dbReference type="GO" id="GO:0006412">
    <property type="term" value="P:translation"/>
    <property type="evidence" value="ECO:0007669"/>
    <property type="project" value="UniProtKB-UniRule"/>
</dbReference>
<dbReference type="FunFam" id="3.30.1440.10:FF:000001">
    <property type="entry name" value="50S ribosomal protein L5"/>
    <property type="match status" value="1"/>
</dbReference>
<dbReference type="Gene3D" id="3.30.1440.10">
    <property type="match status" value="1"/>
</dbReference>
<dbReference type="HAMAP" id="MF_01333_B">
    <property type="entry name" value="Ribosomal_uL5_B"/>
    <property type="match status" value="1"/>
</dbReference>
<dbReference type="InterPro" id="IPR002132">
    <property type="entry name" value="Ribosomal_uL5"/>
</dbReference>
<dbReference type="InterPro" id="IPR020930">
    <property type="entry name" value="Ribosomal_uL5_bac-type"/>
</dbReference>
<dbReference type="InterPro" id="IPR031309">
    <property type="entry name" value="Ribosomal_uL5_C"/>
</dbReference>
<dbReference type="InterPro" id="IPR020929">
    <property type="entry name" value="Ribosomal_uL5_CS"/>
</dbReference>
<dbReference type="InterPro" id="IPR022803">
    <property type="entry name" value="Ribosomal_uL5_dom_sf"/>
</dbReference>
<dbReference type="InterPro" id="IPR031310">
    <property type="entry name" value="Ribosomal_uL5_N"/>
</dbReference>
<dbReference type="NCBIfam" id="NF000585">
    <property type="entry name" value="PRK00010.1"/>
    <property type="match status" value="1"/>
</dbReference>
<dbReference type="PANTHER" id="PTHR11994">
    <property type="entry name" value="60S RIBOSOMAL PROTEIN L11-RELATED"/>
    <property type="match status" value="1"/>
</dbReference>
<dbReference type="Pfam" id="PF00281">
    <property type="entry name" value="Ribosomal_L5"/>
    <property type="match status" value="1"/>
</dbReference>
<dbReference type="Pfam" id="PF00673">
    <property type="entry name" value="Ribosomal_L5_C"/>
    <property type="match status" value="1"/>
</dbReference>
<dbReference type="PIRSF" id="PIRSF002161">
    <property type="entry name" value="Ribosomal_L5"/>
    <property type="match status" value="1"/>
</dbReference>
<dbReference type="SUPFAM" id="SSF55282">
    <property type="entry name" value="RL5-like"/>
    <property type="match status" value="1"/>
</dbReference>
<dbReference type="PROSITE" id="PS00358">
    <property type="entry name" value="RIBOSOMAL_L5"/>
    <property type="match status" value="1"/>
</dbReference>